<name>COAA_MYCSK</name>
<evidence type="ECO:0000255" key="1">
    <source>
        <dbReference type="HAMAP-Rule" id="MF_00215"/>
    </source>
</evidence>
<dbReference type="EC" id="2.7.1.33" evidence="1"/>
<dbReference type="EMBL" id="CP000518">
    <property type="protein sequence ID" value="ABL93400.1"/>
    <property type="molecule type" value="Genomic_DNA"/>
</dbReference>
<dbReference type="SMR" id="A1UKP2"/>
<dbReference type="STRING" id="189918.Mkms_4208"/>
<dbReference type="KEGG" id="mkm:Mkms_4208"/>
<dbReference type="HOGENOM" id="CLU_053818_1_1_11"/>
<dbReference type="OrthoDB" id="1550976at2"/>
<dbReference type="UniPathway" id="UPA00241">
    <property type="reaction ID" value="UER00352"/>
</dbReference>
<dbReference type="GO" id="GO:0005737">
    <property type="term" value="C:cytoplasm"/>
    <property type="evidence" value="ECO:0007669"/>
    <property type="project" value="UniProtKB-SubCell"/>
</dbReference>
<dbReference type="GO" id="GO:0005524">
    <property type="term" value="F:ATP binding"/>
    <property type="evidence" value="ECO:0007669"/>
    <property type="project" value="UniProtKB-UniRule"/>
</dbReference>
<dbReference type="GO" id="GO:0004594">
    <property type="term" value="F:pantothenate kinase activity"/>
    <property type="evidence" value="ECO:0007669"/>
    <property type="project" value="UniProtKB-UniRule"/>
</dbReference>
<dbReference type="GO" id="GO:0015937">
    <property type="term" value="P:coenzyme A biosynthetic process"/>
    <property type="evidence" value="ECO:0007669"/>
    <property type="project" value="UniProtKB-UniRule"/>
</dbReference>
<dbReference type="CDD" id="cd02025">
    <property type="entry name" value="PanK"/>
    <property type="match status" value="1"/>
</dbReference>
<dbReference type="FunFam" id="3.40.50.300:FF:000242">
    <property type="entry name" value="Pantothenate kinase"/>
    <property type="match status" value="1"/>
</dbReference>
<dbReference type="Gene3D" id="3.40.50.300">
    <property type="entry name" value="P-loop containing nucleotide triphosphate hydrolases"/>
    <property type="match status" value="1"/>
</dbReference>
<dbReference type="HAMAP" id="MF_00215">
    <property type="entry name" value="Pantothen_kinase_1"/>
    <property type="match status" value="1"/>
</dbReference>
<dbReference type="InterPro" id="IPR027417">
    <property type="entry name" value="P-loop_NTPase"/>
</dbReference>
<dbReference type="InterPro" id="IPR004566">
    <property type="entry name" value="PanK"/>
</dbReference>
<dbReference type="InterPro" id="IPR006083">
    <property type="entry name" value="PRK/URK"/>
</dbReference>
<dbReference type="NCBIfam" id="TIGR00554">
    <property type="entry name" value="panK_bact"/>
    <property type="match status" value="1"/>
</dbReference>
<dbReference type="PANTHER" id="PTHR10285">
    <property type="entry name" value="URIDINE KINASE"/>
    <property type="match status" value="1"/>
</dbReference>
<dbReference type="Pfam" id="PF00485">
    <property type="entry name" value="PRK"/>
    <property type="match status" value="1"/>
</dbReference>
<dbReference type="PIRSF" id="PIRSF000545">
    <property type="entry name" value="Pantothenate_kin"/>
    <property type="match status" value="1"/>
</dbReference>
<dbReference type="SUPFAM" id="SSF52540">
    <property type="entry name" value="P-loop containing nucleoside triphosphate hydrolases"/>
    <property type="match status" value="1"/>
</dbReference>
<keyword id="KW-0067">ATP-binding</keyword>
<keyword id="KW-0173">Coenzyme A biosynthesis</keyword>
<keyword id="KW-0963">Cytoplasm</keyword>
<keyword id="KW-0418">Kinase</keyword>
<keyword id="KW-0547">Nucleotide-binding</keyword>
<keyword id="KW-0808">Transferase</keyword>
<reference key="1">
    <citation type="submission" date="2006-12" db="EMBL/GenBank/DDBJ databases">
        <title>Complete sequence of chromosome of Mycobacterium sp. KMS.</title>
        <authorList>
            <consortium name="US DOE Joint Genome Institute"/>
            <person name="Copeland A."/>
            <person name="Lucas S."/>
            <person name="Lapidus A."/>
            <person name="Barry K."/>
            <person name="Detter J.C."/>
            <person name="Glavina del Rio T."/>
            <person name="Hammon N."/>
            <person name="Israni S."/>
            <person name="Dalin E."/>
            <person name="Tice H."/>
            <person name="Pitluck S."/>
            <person name="Kiss H."/>
            <person name="Brettin T."/>
            <person name="Bruce D."/>
            <person name="Han C."/>
            <person name="Tapia R."/>
            <person name="Gilna P."/>
            <person name="Schmutz J."/>
            <person name="Larimer F."/>
            <person name="Land M."/>
            <person name="Hauser L."/>
            <person name="Kyrpides N."/>
            <person name="Mikhailova N."/>
            <person name="Miller C.D."/>
            <person name="Richardson P."/>
        </authorList>
    </citation>
    <scope>NUCLEOTIDE SEQUENCE [LARGE SCALE GENOMIC DNA]</scope>
    <source>
        <strain>KMS</strain>
    </source>
</reference>
<organism>
    <name type="scientific">Mycobacterium sp. (strain KMS)</name>
    <dbReference type="NCBI Taxonomy" id="189918"/>
    <lineage>
        <taxon>Bacteria</taxon>
        <taxon>Bacillati</taxon>
        <taxon>Actinomycetota</taxon>
        <taxon>Actinomycetes</taxon>
        <taxon>Mycobacteriales</taxon>
        <taxon>Mycobacteriaceae</taxon>
        <taxon>Mycobacterium</taxon>
    </lineage>
</organism>
<comment type="catalytic activity">
    <reaction evidence="1">
        <text>(R)-pantothenate + ATP = (R)-4'-phosphopantothenate + ADP + H(+)</text>
        <dbReference type="Rhea" id="RHEA:16373"/>
        <dbReference type="ChEBI" id="CHEBI:10986"/>
        <dbReference type="ChEBI" id="CHEBI:15378"/>
        <dbReference type="ChEBI" id="CHEBI:29032"/>
        <dbReference type="ChEBI" id="CHEBI:30616"/>
        <dbReference type="ChEBI" id="CHEBI:456216"/>
        <dbReference type="EC" id="2.7.1.33"/>
    </reaction>
</comment>
<comment type="pathway">
    <text evidence="1">Cofactor biosynthesis; coenzyme A biosynthesis; CoA from (R)-pantothenate: step 1/5.</text>
</comment>
<comment type="subcellular location">
    <subcellularLocation>
        <location evidence="1">Cytoplasm</location>
    </subcellularLocation>
</comment>
<comment type="similarity">
    <text evidence="1">Belongs to the prokaryotic pantothenate kinase family.</text>
</comment>
<gene>
    <name evidence="1" type="primary">coaA</name>
    <name type="ordered locus">Mkms_4208</name>
</gene>
<proteinExistence type="inferred from homology"/>
<protein>
    <recommendedName>
        <fullName evidence="1">Pantothenate kinase</fullName>
        <ecNumber evidence="1">2.7.1.33</ecNumber>
    </recommendedName>
    <alternativeName>
        <fullName evidence="1">Pantothenic acid kinase</fullName>
    </alternativeName>
</protein>
<sequence length="312" mass="35477">MARLSEPSPYVEFDRTQWRALRMSTPLKLTEDELKKLRGLGEKLDLLEVEEVYLPLARLIHLQVAARQRLFAATSEFLGEPQQNPDRPVPFIIGVAGSVAVGKSTTARVLQALLARWGNHARVDLVTTDGFLYPNAELGRRNIMHRKGFPESYDRRALMRFVTAVKSGADYACAPVYSHLLYDIVPGEKQVIRHPDILILEGLNVLQTGPALMVSDLFDFSVYVDARLEDIEGWYISRFLTMRSTAFADPASHFHHYATLTDEQAVFAARDIWHSINRPNLIENILPTRPRATLVLRKDADHAINRLRLRKL</sequence>
<accession>A1UKP2</accession>
<feature type="chain" id="PRO_1000043230" description="Pantothenate kinase">
    <location>
        <begin position="1"/>
        <end position="312"/>
    </location>
</feature>
<feature type="binding site" evidence="1">
    <location>
        <begin position="97"/>
        <end position="104"/>
    </location>
    <ligand>
        <name>ATP</name>
        <dbReference type="ChEBI" id="CHEBI:30616"/>
    </ligand>
</feature>